<dbReference type="EMBL" id="AAGW02043964">
    <property type="status" value="NOT_ANNOTATED_CDS"/>
    <property type="molecule type" value="Genomic_DNA"/>
</dbReference>
<dbReference type="RefSeq" id="XP_008260230.1">
    <property type="nucleotide sequence ID" value="XM_008262008.4"/>
</dbReference>
<dbReference type="RefSeq" id="XP_069912656.1">
    <property type="nucleotide sequence ID" value="XM_070056555.1"/>
</dbReference>
<dbReference type="PDB" id="3JAG">
    <property type="method" value="EM"/>
    <property type="resolution" value="3.65 A"/>
    <property type="chains" value="gg=10-314"/>
</dbReference>
<dbReference type="PDB" id="3JAH">
    <property type="method" value="EM"/>
    <property type="resolution" value="3.45 A"/>
    <property type="chains" value="gg=10-314"/>
</dbReference>
<dbReference type="PDB" id="3JAI">
    <property type="method" value="EM"/>
    <property type="resolution" value="3.65 A"/>
    <property type="chains" value="gg=10-314"/>
</dbReference>
<dbReference type="PDB" id="4D5L">
    <property type="method" value="EM"/>
    <property type="resolution" value="9.00 A"/>
    <property type="chains" value="g=10-317"/>
</dbReference>
<dbReference type="PDB" id="4D61">
    <property type="method" value="EM"/>
    <property type="resolution" value="9.00 A"/>
    <property type="chains" value="g=10-317"/>
</dbReference>
<dbReference type="PDB" id="4KZX">
    <property type="method" value="X-ray"/>
    <property type="resolution" value="7.81 A"/>
    <property type="chains" value="g=10-317"/>
</dbReference>
<dbReference type="PDB" id="4KZY">
    <property type="method" value="X-ray"/>
    <property type="resolution" value="7.01 A"/>
    <property type="chains" value="g=10-317"/>
</dbReference>
<dbReference type="PDB" id="4KZZ">
    <property type="method" value="X-ray"/>
    <property type="resolution" value="7.03 A"/>
    <property type="chains" value="g=10-317"/>
</dbReference>
<dbReference type="PDB" id="5K0Y">
    <property type="method" value="EM"/>
    <property type="resolution" value="5.80 A"/>
    <property type="chains" value="m=10-314"/>
</dbReference>
<dbReference type="PDB" id="5LZS">
    <property type="method" value="EM"/>
    <property type="resolution" value="3.31 A"/>
    <property type="chains" value="gg=10-317"/>
</dbReference>
<dbReference type="PDB" id="5LZT">
    <property type="method" value="EM"/>
    <property type="resolution" value="3.65 A"/>
    <property type="chains" value="gg=10-317"/>
</dbReference>
<dbReference type="PDB" id="5LZU">
    <property type="method" value="EM"/>
    <property type="resolution" value="3.75 A"/>
    <property type="chains" value="gg=10-317"/>
</dbReference>
<dbReference type="PDB" id="5LZV">
    <property type="method" value="EM"/>
    <property type="resolution" value="3.35 A"/>
    <property type="chains" value="gg=10-317"/>
</dbReference>
<dbReference type="PDB" id="5LZW">
    <property type="method" value="EM"/>
    <property type="resolution" value="3.53 A"/>
    <property type="chains" value="gg=10-317"/>
</dbReference>
<dbReference type="PDB" id="5LZX">
    <property type="method" value="EM"/>
    <property type="resolution" value="3.67 A"/>
    <property type="chains" value="gg=10-317"/>
</dbReference>
<dbReference type="PDB" id="5LZY">
    <property type="method" value="EM"/>
    <property type="resolution" value="3.99 A"/>
    <property type="chains" value="gg=10-317"/>
</dbReference>
<dbReference type="PDB" id="5LZZ">
    <property type="method" value="EM"/>
    <property type="resolution" value="3.47 A"/>
    <property type="chains" value="gg=10-317"/>
</dbReference>
<dbReference type="PDB" id="6D90">
    <property type="method" value="EM"/>
    <property type="resolution" value="3.20 A"/>
    <property type="chains" value="hh=10-317"/>
</dbReference>
<dbReference type="PDB" id="6D9J">
    <property type="method" value="EM"/>
    <property type="resolution" value="3.20 A"/>
    <property type="chains" value="hh=10-317"/>
</dbReference>
<dbReference type="PDB" id="6GZ3">
    <property type="method" value="EM"/>
    <property type="resolution" value="3.60 A"/>
    <property type="chains" value="Bg=10-315"/>
</dbReference>
<dbReference type="PDB" id="6HCF">
    <property type="method" value="EM"/>
    <property type="resolution" value="3.90 A"/>
    <property type="chains" value="h1=10-317"/>
</dbReference>
<dbReference type="PDB" id="6HCJ">
    <property type="method" value="EM"/>
    <property type="resolution" value="3.80 A"/>
    <property type="chains" value="h2=10-317"/>
</dbReference>
<dbReference type="PDB" id="6HCM">
    <property type="method" value="EM"/>
    <property type="resolution" value="6.80 A"/>
    <property type="chains" value="h1=10-317"/>
</dbReference>
<dbReference type="PDB" id="6HCQ">
    <property type="method" value="EM"/>
    <property type="resolution" value="6.50 A"/>
    <property type="chains" value="h2=10-317"/>
</dbReference>
<dbReference type="PDB" id="6MTB">
    <property type="method" value="EM"/>
    <property type="resolution" value="3.60 A"/>
    <property type="chains" value="gg=10-314"/>
</dbReference>
<dbReference type="PDB" id="6MTC">
    <property type="method" value="EM"/>
    <property type="resolution" value="3.40 A"/>
    <property type="chains" value="gg=10-314"/>
</dbReference>
<dbReference type="PDB" id="6MTD">
    <property type="method" value="EM"/>
    <property type="resolution" value="3.30 A"/>
    <property type="chains" value="gg=10-314"/>
</dbReference>
<dbReference type="PDB" id="6MTE">
    <property type="method" value="EM"/>
    <property type="resolution" value="3.40 A"/>
    <property type="chains" value="gg=10-314"/>
</dbReference>
<dbReference type="PDB" id="6P4G">
    <property type="method" value="EM"/>
    <property type="resolution" value="3.10 A"/>
    <property type="chains" value="h=10-317"/>
</dbReference>
<dbReference type="PDB" id="6P4H">
    <property type="method" value="EM"/>
    <property type="resolution" value="3.20 A"/>
    <property type="chains" value="h=10-317"/>
</dbReference>
<dbReference type="PDB" id="6P5I">
    <property type="method" value="EM"/>
    <property type="resolution" value="3.10 A"/>
    <property type="chains" value="h=10-317"/>
</dbReference>
<dbReference type="PDB" id="6P5J">
    <property type="method" value="EM"/>
    <property type="resolution" value="3.10 A"/>
    <property type="chains" value="h=10-317"/>
</dbReference>
<dbReference type="PDB" id="6P5K">
    <property type="method" value="EM"/>
    <property type="resolution" value="3.10 A"/>
    <property type="chains" value="h=10-317"/>
</dbReference>
<dbReference type="PDB" id="6P5N">
    <property type="method" value="EM"/>
    <property type="resolution" value="3.20 A"/>
    <property type="chains" value="h=10-317"/>
</dbReference>
<dbReference type="PDB" id="6R5Q">
    <property type="method" value="EM"/>
    <property type="resolution" value="3.00 A"/>
    <property type="chains" value="6=10-314"/>
</dbReference>
<dbReference type="PDB" id="6R6G">
    <property type="method" value="EM"/>
    <property type="resolution" value="3.70 A"/>
    <property type="chains" value="6=10-314"/>
</dbReference>
<dbReference type="PDB" id="6R6P">
    <property type="method" value="EM"/>
    <property type="resolution" value="3.10 A"/>
    <property type="chains" value="6=10-314"/>
</dbReference>
<dbReference type="PDB" id="6R7Q">
    <property type="method" value="EM"/>
    <property type="resolution" value="3.90 A"/>
    <property type="chains" value="6=10-314"/>
</dbReference>
<dbReference type="PDB" id="6SGC">
    <property type="method" value="EM"/>
    <property type="resolution" value="2.80 A"/>
    <property type="chains" value="h1=10-317"/>
</dbReference>
<dbReference type="PDB" id="6W2S">
    <property type="method" value="EM"/>
    <property type="resolution" value="3.00 A"/>
    <property type="chains" value="h=10-317"/>
</dbReference>
<dbReference type="PDB" id="6W2T">
    <property type="method" value="EM"/>
    <property type="resolution" value="3.36 A"/>
    <property type="chains" value="h=10-317"/>
</dbReference>
<dbReference type="PDB" id="6YAL">
    <property type="method" value="EM"/>
    <property type="resolution" value="3.00 A"/>
    <property type="chains" value="g=10-314"/>
</dbReference>
<dbReference type="PDB" id="6YAM">
    <property type="method" value="EM"/>
    <property type="resolution" value="3.60 A"/>
    <property type="chains" value="g=10-314"/>
</dbReference>
<dbReference type="PDB" id="6YAN">
    <property type="method" value="EM"/>
    <property type="resolution" value="3.48 A"/>
    <property type="chains" value="g=10-314"/>
</dbReference>
<dbReference type="PDB" id="6ZVK">
    <property type="method" value="EM"/>
    <property type="resolution" value="3.49 A"/>
    <property type="chains" value="a3=10-314"/>
</dbReference>
<dbReference type="PDB" id="7A01">
    <property type="method" value="EM"/>
    <property type="resolution" value="3.60 A"/>
    <property type="chains" value="a3=10-314"/>
</dbReference>
<dbReference type="PDB" id="7JQB">
    <property type="method" value="EM"/>
    <property type="resolution" value="2.70 A"/>
    <property type="chains" value="h=10-317"/>
</dbReference>
<dbReference type="PDB" id="7JQC">
    <property type="method" value="EM"/>
    <property type="resolution" value="3.30 A"/>
    <property type="chains" value="h=10-317"/>
</dbReference>
<dbReference type="PDB" id="7MDZ">
    <property type="method" value="EM"/>
    <property type="resolution" value="3.20 A"/>
    <property type="chains" value="gg=10-317"/>
</dbReference>
<dbReference type="PDB" id="7NWG">
    <property type="method" value="EM"/>
    <property type="resolution" value="3.80 A"/>
    <property type="chains" value="h2=10-314"/>
</dbReference>
<dbReference type="PDB" id="7NWI">
    <property type="method" value="EM"/>
    <property type="resolution" value="3.13 A"/>
    <property type="chains" value="gg=10-314"/>
</dbReference>
<dbReference type="PDB" id="7O7Y">
    <property type="method" value="EM"/>
    <property type="resolution" value="2.20 A"/>
    <property type="chains" value="AF=10-317"/>
</dbReference>
<dbReference type="PDB" id="7O7Z">
    <property type="method" value="EM"/>
    <property type="resolution" value="2.40 A"/>
    <property type="chains" value="AF=10-317"/>
</dbReference>
<dbReference type="PDB" id="7O80">
    <property type="method" value="EM"/>
    <property type="resolution" value="2.90 A"/>
    <property type="chains" value="AF=10-317"/>
</dbReference>
<dbReference type="PDB" id="7O81">
    <property type="method" value="EM"/>
    <property type="resolution" value="3.10 A"/>
    <property type="chains" value="AF=10-317"/>
</dbReference>
<dbReference type="PDB" id="7OYD">
    <property type="method" value="EM"/>
    <property type="resolution" value="2.30 A"/>
    <property type="chains" value="Gg=10-317"/>
</dbReference>
<dbReference type="PDB" id="7SYG">
    <property type="method" value="EM"/>
    <property type="resolution" value="4.30 A"/>
    <property type="chains" value="h=10-317"/>
</dbReference>
<dbReference type="PDB" id="7SYH">
    <property type="method" value="EM"/>
    <property type="resolution" value="4.60 A"/>
    <property type="chains" value="h=10-317"/>
</dbReference>
<dbReference type="PDB" id="7SYI">
    <property type="method" value="EM"/>
    <property type="resolution" value="4.50 A"/>
    <property type="chains" value="h=10-317"/>
</dbReference>
<dbReference type="PDB" id="7SYJ">
    <property type="method" value="EM"/>
    <property type="resolution" value="4.80 A"/>
    <property type="chains" value="h=10-317"/>
</dbReference>
<dbReference type="PDB" id="7SYK">
    <property type="method" value="EM"/>
    <property type="resolution" value="4.20 A"/>
    <property type="chains" value="h=10-317"/>
</dbReference>
<dbReference type="PDB" id="7SYL">
    <property type="method" value="EM"/>
    <property type="resolution" value="4.50 A"/>
    <property type="chains" value="h=10-317"/>
</dbReference>
<dbReference type="PDB" id="7SYM">
    <property type="method" value="EM"/>
    <property type="resolution" value="4.80 A"/>
    <property type="chains" value="h=10-317"/>
</dbReference>
<dbReference type="PDB" id="7SYN">
    <property type="method" value="EM"/>
    <property type="resolution" value="4.00 A"/>
    <property type="chains" value="h=10-317"/>
</dbReference>
<dbReference type="PDB" id="7SYO">
    <property type="method" value="EM"/>
    <property type="resolution" value="4.60 A"/>
    <property type="chains" value="h=10-317"/>
</dbReference>
<dbReference type="PDB" id="7SYP">
    <property type="method" value="EM"/>
    <property type="resolution" value="4.00 A"/>
    <property type="chains" value="h=10-317"/>
</dbReference>
<dbReference type="PDB" id="7SYQ">
    <property type="method" value="EM"/>
    <property type="resolution" value="3.80 A"/>
    <property type="chains" value="h=10-317"/>
</dbReference>
<dbReference type="PDB" id="7SYR">
    <property type="method" value="EM"/>
    <property type="resolution" value="3.60 A"/>
    <property type="chains" value="h=10-317"/>
</dbReference>
<dbReference type="PDB" id="7SYS">
    <property type="method" value="EM"/>
    <property type="resolution" value="3.50 A"/>
    <property type="chains" value="h=10-317"/>
</dbReference>
<dbReference type="PDB" id="7SYT">
    <property type="method" value="EM"/>
    <property type="resolution" value="4.40 A"/>
    <property type="chains" value="h=10-317"/>
</dbReference>
<dbReference type="PDB" id="7SYU">
    <property type="method" value="EM"/>
    <property type="resolution" value="4.60 A"/>
    <property type="chains" value="h=10-317"/>
</dbReference>
<dbReference type="PDB" id="7SYV">
    <property type="method" value="EM"/>
    <property type="resolution" value="3.90 A"/>
    <property type="chains" value="h=10-317"/>
</dbReference>
<dbReference type="PDB" id="7SYW">
    <property type="method" value="EM"/>
    <property type="resolution" value="3.70 A"/>
    <property type="chains" value="h=10-317"/>
</dbReference>
<dbReference type="PDB" id="7SYX">
    <property type="method" value="EM"/>
    <property type="resolution" value="3.70 A"/>
    <property type="chains" value="h=10-317"/>
</dbReference>
<dbReference type="PDB" id="7TOQ">
    <property type="method" value="EM"/>
    <property type="resolution" value="3.10 A"/>
    <property type="chains" value="ARAC=10-314"/>
</dbReference>
<dbReference type="PDB" id="7TOR">
    <property type="method" value="EM"/>
    <property type="resolution" value="2.90 A"/>
    <property type="chains" value="ARAC=10-314"/>
</dbReference>
<dbReference type="PDB" id="7UCJ">
    <property type="method" value="EM"/>
    <property type="resolution" value="3.10 A"/>
    <property type="chains" value="Gg=10-314"/>
</dbReference>
<dbReference type="PDB" id="7UCK">
    <property type="method" value="EM"/>
    <property type="resolution" value="2.80 A"/>
    <property type="chains" value="Gg=10-314"/>
</dbReference>
<dbReference type="PDB" id="8BHF">
    <property type="method" value="EM"/>
    <property type="resolution" value="3.10 A"/>
    <property type="chains" value="h3=10-314"/>
</dbReference>
<dbReference type="PDB" id="8BTK">
    <property type="method" value="EM"/>
    <property type="resolution" value="3.50 A"/>
    <property type="chains" value="AF=10-317"/>
</dbReference>
<dbReference type="PDB" id="8P03">
    <property type="method" value="EM"/>
    <property type="resolution" value="3.04 A"/>
    <property type="chains" value="g=2-314"/>
</dbReference>
<dbReference type="PDB" id="8P09">
    <property type="method" value="EM"/>
    <property type="resolution" value="3.30 A"/>
    <property type="chains" value="g=2-314"/>
</dbReference>
<dbReference type="PDB" id="8P2K">
    <property type="method" value="EM"/>
    <property type="resolution" value="2.90 A"/>
    <property type="chains" value="AF=10-317"/>
</dbReference>
<dbReference type="PDB" id="8SCB">
    <property type="method" value="EM"/>
    <property type="resolution" value="2.50 A"/>
    <property type="chains" value="gg=1-317"/>
</dbReference>
<dbReference type="PDB" id="8VFT">
    <property type="method" value="EM"/>
    <property type="resolution" value="3.30 A"/>
    <property type="chains" value="gg=1-317"/>
</dbReference>
<dbReference type="PDB" id="9BDL">
    <property type="method" value="EM"/>
    <property type="resolution" value="2.80 A"/>
    <property type="chains" value="ARAC=2-314"/>
</dbReference>
<dbReference type="PDB" id="9BDN">
    <property type="method" value="EM"/>
    <property type="resolution" value="3.10 A"/>
    <property type="chains" value="ARAC=2-314"/>
</dbReference>
<dbReference type="PDB" id="9BDP">
    <property type="method" value="EM"/>
    <property type="resolution" value="3.70 A"/>
    <property type="chains" value="ARAC=2-314"/>
</dbReference>
<dbReference type="PDB" id="9C8K">
    <property type="method" value="EM"/>
    <property type="resolution" value="3.10 A"/>
    <property type="chains" value="g=1-317"/>
</dbReference>
<dbReference type="PDB" id="9F1B">
    <property type="method" value="EM"/>
    <property type="resolution" value="3.01 A"/>
    <property type="chains" value="AF=1-317"/>
</dbReference>
<dbReference type="PDB" id="9F1C">
    <property type="method" value="EM"/>
    <property type="resolution" value="3.78 A"/>
    <property type="chains" value="AF=1-317"/>
</dbReference>
<dbReference type="PDB" id="9F1D">
    <property type="method" value="EM"/>
    <property type="resolution" value="3.26 A"/>
    <property type="chains" value="AF=1-317"/>
</dbReference>
<dbReference type="PDBsum" id="3JAG"/>
<dbReference type="PDBsum" id="3JAH"/>
<dbReference type="PDBsum" id="3JAI"/>
<dbReference type="PDBsum" id="4D5L"/>
<dbReference type="PDBsum" id="4D61"/>
<dbReference type="PDBsum" id="4KZX"/>
<dbReference type="PDBsum" id="4KZY"/>
<dbReference type="PDBsum" id="4KZZ"/>
<dbReference type="PDBsum" id="5K0Y"/>
<dbReference type="PDBsum" id="5LZS"/>
<dbReference type="PDBsum" id="5LZT"/>
<dbReference type="PDBsum" id="5LZU"/>
<dbReference type="PDBsum" id="5LZV"/>
<dbReference type="PDBsum" id="5LZW"/>
<dbReference type="PDBsum" id="5LZX"/>
<dbReference type="PDBsum" id="5LZY"/>
<dbReference type="PDBsum" id="5LZZ"/>
<dbReference type="PDBsum" id="6D90"/>
<dbReference type="PDBsum" id="6D9J"/>
<dbReference type="PDBsum" id="6GZ3"/>
<dbReference type="PDBsum" id="6HCF"/>
<dbReference type="PDBsum" id="6HCJ"/>
<dbReference type="PDBsum" id="6HCM"/>
<dbReference type="PDBsum" id="6HCQ"/>
<dbReference type="PDBsum" id="6MTB"/>
<dbReference type="PDBsum" id="6MTC"/>
<dbReference type="PDBsum" id="6MTD"/>
<dbReference type="PDBsum" id="6MTE"/>
<dbReference type="PDBsum" id="6P4G"/>
<dbReference type="PDBsum" id="6P4H"/>
<dbReference type="PDBsum" id="6P5I"/>
<dbReference type="PDBsum" id="6P5J"/>
<dbReference type="PDBsum" id="6P5K"/>
<dbReference type="PDBsum" id="6P5N"/>
<dbReference type="PDBsum" id="6R5Q"/>
<dbReference type="PDBsum" id="6R6G"/>
<dbReference type="PDBsum" id="6R6P"/>
<dbReference type="PDBsum" id="6R7Q"/>
<dbReference type="PDBsum" id="6SGC"/>
<dbReference type="PDBsum" id="6W2S"/>
<dbReference type="PDBsum" id="6W2T"/>
<dbReference type="PDBsum" id="6YAL"/>
<dbReference type="PDBsum" id="6YAM"/>
<dbReference type="PDBsum" id="6YAN"/>
<dbReference type="PDBsum" id="6ZVK"/>
<dbReference type="PDBsum" id="7A01"/>
<dbReference type="PDBsum" id="7JQB"/>
<dbReference type="PDBsum" id="7JQC"/>
<dbReference type="PDBsum" id="7MDZ"/>
<dbReference type="PDBsum" id="7NWG"/>
<dbReference type="PDBsum" id="7NWI"/>
<dbReference type="PDBsum" id="7O7Y"/>
<dbReference type="PDBsum" id="7O7Z"/>
<dbReference type="PDBsum" id="7O80"/>
<dbReference type="PDBsum" id="7O81"/>
<dbReference type="PDBsum" id="7OYD"/>
<dbReference type="PDBsum" id="7SYG"/>
<dbReference type="PDBsum" id="7SYH"/>
<dbReference type="PDBsum" id="7SYI"/>
<dbReference type="PDBsum" id="7SYJ"/>
<dbReference type="PDBsum" id="7SYK"/>
<dbReference type="PDBsum" id="7SYL"/>
<dbReference type="PDBsum" id="7SYM"/>
<dbReference type="PDBsum" id="7SYN"/>
<dbReference type="PDBsum" id="7SYO"/>
<dbReference type="PDBsum" id="7SYP"/>
<dbReference type="PDBsum" id="7SYQ"/>
<dbReference type="PDBsum" id="7SYR"/>
<dbReference type="PDBsum" id="7SYS"/>
<dbReference type="PDBsum" id="7SYT"/>
<dbReference type="PDBsum" id="7SYU"/>
<dbReference type="PDBsum" id="7SYV"/>
<dbReference type="PDBsum" id="7SYW"/>
<dbReference type="PDBsum" id="7SYX"/>
<dbReference type="PDBsum" id="7TOQ"/>
<dbReference type="PDBsum" id="7TOR"/>
<dbReference type="PDBsum" id="7UCJ"/>
<dbReference type="PDBsum" id="7UCK"/>
<dbReference type="PDBsum" id="8BHF"/>
<dbReference type="PDBsum" id="8BTK"/>
<dbReference type="PDBsum" id="8P03"/>
<dbReference type="PDBsum" id="8P09"/>
<dbReference type="PDBsum" id="8P2K"/>
<dbReference type="PDBsum" id="8SCB"/>
<dbReference type="PDBsum" id="8VFT"/>
<dbReference type="PDBsum" id="9BDL"/>
<dbReference type="PDBsum" id="9BDN"/>
<dbReference type="PDBsum" id="9BDP"/>
<dbReference type="PDBsum" id="9C8K"/>
<dbReference type="PDBsum" id="9F1B"/>
<dbReference type="PDBsum" id="9F1C"/>
<dbReference type="PDBsum" id="9F1D"/>
<dbReference type="EMDB" id="EMD-0098"/>
<dbReference type="EMDB" id="EMD-0099"/>
<dbReference type="EMDB" id="EMD-0100"/>
<dbReference type="EMDB" id="EMD-0192"/>
<dbReference type="EMDB" id="EMD-0194"/>
<dbReference type="EMDB" id="EMD-0195"/>
<dbReference type="EMDB" id="EMD-0197"/>
<dbReference type="EMDB" id="EMD-10181"/>
<dbReference type="EMDB" id="EMD-10760"/>
<dbReference type="EMDB" id="EMD-10761"/>
<dbReference type="EMDB" id="EMD-10762"/>
<dbReference type="EMDB" id="EMD-11459"/>
<dbReference type="EMDB" id="EMD-11590"/>
<dbReference type="EMDB" id="EMD-12631"/>
<dbReference type="EMDB" id="EMD-12633"/>
<dbReference type="EMDB" id="EMD-12756"/>
<dbReference type="EMDB" id="EMD-12757"/>
<dbReference type="EMDB" id="EMD-12758"/>
<dbReference type="EMDB" id="EMD-12759"/>
<dbReference type="EMDB" id="EMD-13114"/>
<dbReference type="EMDB" id="EMD-16052"/>
<dbReference type="EMDB" id="EMD-16232"/>
<dbReference type="EMDB" id="EMD-17329"/>
<dbReference type="EMDB" id="EMD-17330"/>
<dbReference type="EMDB" id="EMD-17367"/>
<dbReference type="EMDB" id="EMD-20248"/>
<dbReference type="EMDB" id="EMD-20249"/>
<dbReference type="EMDB" id="EMD-20255"/>
<dbReference type="EMDB" id="EMD-20256"/>
<dbReference type="EMDB" id="EMD-20257"/>
<dbReference type="EMDB" id="EMD-20258"/>
<dbReference type="EMDB" id="EMD-21529"/>
<dbReference type="EMDB" id="EMD-21530"/>
<dbReference type="EMDB" id="EMD-22432"/>
<dbReference type="EMDB" id="EMD-22433"/>
<dbReference type="EMDB" id="EMD-23785"/>
<dbReference type="EMDB" id="EMD-25527"/>
<dbReference type="EMDB" id="EMD-25528"/>
<dbReference type="EMDB" id="EMD-25529"/>
<dbReference type="EMDB" id="EMD-25530"/>
<dbReference type="EMDB" id="EMD-25531"/>
<dbReference type="EMDB" id="EMD-25532"/>
<dbReference type="EMDB" id="EMD-25533"/>
<dbReference type="EMDB" id="EMD-25534"/>
<dbReference type="EMDB" id="EMD-25535"/>
<dbReference type="EMDB" id="EMD-25536"/>
<dbReference type="EMDB" id="EMD-25537"/>
<dbReference type="EMDB" id="EMD-25538"/>
<dbReference type="EMDB" id="EMD-25539"/>
<dbReference type="EMDB" id="EMD-25540"/>
<dbReference type="EMDB" id="EMD-25541"/>
<dbReference type="EMDB" id="EMD-25542"/>
<dbReference type="EMDB" id="EMD-25543"/>
<dbReference type="EMDB" id="EMD-25544"/>
<dbReference type="EMDB" id="EMD-26035"/>
<dbReference type="EMDB" id="EMD-26036"/>
<dbReference type="EMDB" id="EMD-26444"/>
<dbReference type="EMDB" id="EMD-26445"/>
<dbReference type="EMDB" id="EMD-40344"/>
<dbReference type="EMDB" id="EMD-4130"/>
<dbReference type="EMDB" id="EMD-4131"/>
<dbReference type="EMDB" id="EMD-4132"/>
<dbReference type="EMDB" id="EMD-4133"/>
<dbReference type="EMDB" id="EMD-4134"/>
<dbReference type="EMDB" id="EMD-4135"/>
<dbReference type="EMDB" id="EMD-4136"/>
<dbReference type="EMDB" id="EMD-4137"/>
<dbReference type="EMDB" id="EMD-43189"/>
<dbReference type="EMDB" id="EMD-44461"/>
<dbReference type="EMDB" id="EMD-44463"/>
<dbReference type="EMDB" id="EMD-44464"/>
<dbReference type="EMDB" id="EMD-45307"/>
<dbReference type="EMDB" id="EMD-4729"/>
<dbReference type="EMDB" id="EMD-4735"/>
<dbReference type="EMDB" id="EMD-4737"/>
<dbReference type="EMDB" id="EMD-4745"/>
<dbReference type="EMDB" id="EMD-50124"/>
<dbReference type="EMDB" id="EMD-50125"/>
<dbReference type="EMDB" id="EMD-50126"/>
<dbReference type="EMDB" id="EMD-7834"/>
<dbReference type="EMDB" id="EMD-7836"/>
<dbReference type="EMDB" id="EMD-8190"/>
<dbReference type="EMDB" id="EMD-9237"/>
<dbReference type="EMDB" id="EMD-9239"/>
<dbReference type="EMDB" id="EMD-9240"/>
<dbReference type="EMDB" id="EMD-9242"/>
<dbReference type="SMR" id="G1SJB4"/>
<dbReference type="FunCoup" id="G1SJB4">
    <property type="interactions" value="1621"/>
</dbReference>
<dbReference type="IntAct" id="G1SJB4">
    <property type="interactions" value="1"/>
</dbReference>
<dbReference type="STRING" id="9986.ENSOCUP00000002819"/>
<dbReference type="PaxDb" id="9986-ENSOCUP00000021055"/>
<dbReference type="GeneID" id="100009557"/>
<dbReference type="KEGG" id="ocu:100009557"/>
<dbReference type="CTD" id="10399"/>
<dbReference type="HOGENOM" id="CLU_000288_57_7_1"/>
<dbReference type="InParanoid" id="G1SJB4"/>
<dbReference type="EvolutionaryTrace" id="G1SJB4"/>
<dbReference type="Proteomes" id="UP000001811">
    <property type="component" value="Chromosome 11"/>
</dbReference>
<dbReference type="Bgee" id="ENSOCUG00000023680">
    <property type="expression patterns" value="Expressed in upper lobe of left lung and 14 other cell types or tissues"/>
</dbReference>
<dbReference type="ExpressionAtlas" id="G1SJB4">
    <property type="expression patterns" value="baseline"/>
</dbReference>
<dbReference type="GO" id="GO:0030425">
    <property type="term" value="C:dendrite"/>
    <property type="evidence" value="ECO:0007669"/>
    <property type="project" value="UniProtKB-SubCell"/>
</dbReference>
<dbReference type="GO" id="GO:0005634">
    <property type="term" value="C:nucleus"/>
    <property type="evidence" value="ECO:0007669"/>
    <property type="project" value="UniProtKB-SubCell"/>
</dbReference>
<dbReference type="GO" id="GO:0043204">
    <property type="term" value="C:perikaryon"/>
    <property type="evidence" value="ECO:0007669"/>
    <property type="project" value="UniProtKB-SubCell"/>
</dbReference>
<dbReference type="GO" id="GO:0048471">
    <property type="term" value="C:perinuclear region of cytoplasm"/>
    <property type="evidence" value="ECO:0007669"/>
    <property type="project" value="UniProtKB-SubCell"/>
</dbReference>
<dbReference type="GO" id="GO:0001891">
    <property type="term" value="C:phagocytic cup"/>
    <property type="evidence" value="ECO:0007669"/>
    <property type="project" value="UniProtKB-SubCell"/>
</dbReference>
<dbReference type="GO" id="GO:1990904">
    <property type="term" value="C:ribonucleoprotein complex"/>
    <property type="evidence" value="ECO:0007669"/>
    <property type="project" value="UniProtKB-KW"/>
</dbReference>
<dbReference type="GO" id="GO:0005840">
    <property type="term" value="C:ribosome"/>
    <property type="evidence" value="ECO:0007669"/>
    <property type="project" value="UniProtKB-KW"/>
</dbReference>
<dbReference type="GO" id="GO:0043022">
    <property type="term" value="F:ribosome binding"/>
    <property type="evidence" value="ECO:0007669"/>
    <property type="project" value="InterPro"/>
</dbReference>
<dbReference type="GO" id="GO:0045182">
    <property type="term" value="F:translation regulator activity"/>
    <property type="evidence" value="ECO:0007669"/>
    <property type="project" value="InterPro"/>
</dbReference>
<dbReference type="GO" id="GO:0006915">
    <property type="term" value="P:apoptotic process"/>
    <property type="evidence" value="ECO:0007669"/>
    <property type="project" value="UniProtKB-KW"/>
</dbReference>
<dbReference type="GO" id="GO:0007369">
    <property type="term" value="P:gastrulation"/>
    <property type="evidence" value="ECO:0007669"/>
    <property type="project" value="UniProtKB-KW"/>
</dbReference>
<dbReference type="GO" id="GO:0048511">
    <property type="term" value="P:rhythmic process"/>
    <property type="evidence" value="ECO:0007669"/>
    <property type="project" value="UniProtKB-KW"/>
</dbReference>
<dbReference type="CDD" id="cd00200">
    <property type="entry name" value="WD40"/>
    <property type="match status" value="1"/>
</dbReference>
<dbReference type="FunFam" id="2.130.10.10:FF:001252">
    <property type="entry name" value="Receptor of activated protein C kinase 1"/>
    <property type="match status" value="1"/>
</dbReference>
<dbReference type="Gene3D" id="2.130.10.10">
    <property type="entry name" value="YVTN repeat-like/Quinoprotein amine dehydrogenase"/>
    <property type="match status" value="1"/>
</dbReference>
<dbReference type="InterPro" id="IPR020472">
    <property type="entry name" value="G-protein_beta_WD-40_rep"/>
</dbReference>
<dbReference type="InterPro" id="IPR045223">
    <property type="entry name" value="RACK1-like"/>
</dbReference>
<dbReference type="InterPro" id="IPR015943">
    <property type="entry name" value="WD40/YVTN_repeat-like_dom_sf"/>
</dbReference>
<dbReference type="InterPro" id="IPR019775">
    <property type="entry name" value="WD40_repeat_CS"/>
</dbReference>
<dbReference type="InterPro" id="IPR036322">
    <property type="entry name" value="WD40_repeat_dom_sf"/>
</dbReference>
<dbReference type="InterPro" id="IPR001680">
    <property type="entry name" value="WD40_rpt"/>
</dbReference>
<dbReference type="PANTHER" id="PTHR19868">
    <property type="entry name" value="RECEPTOR FOR ACTIVATED PROTEIN KINASE C RACK1"/>
    <property type="match status" value="1"/>
</dbReference>
<dbReference type="Pfam" id="PF00400">
    <property type="entry name" value="WD40"/>
    <property type="match status" value="7"/>
</dbReference>
<dbReference type="PRINTS" id="PR00320">
    <property type="entry name" value="GPROTEINBRPT"/>
</dbReference>
<dbReference type="SMART" id="SM00320">
    <property type="entry name" value="WD40"/>
    <property type="match status" value="7"/>
</dbReference>
<dbReference type="SUPFAM" id="SSF50978">
    <property type="entry name" value="WD40 repeat-like"/>
    <property type="match status" value="1"/>
</dbReference>
<dbReference type="PROSITE" id="PS00678">
    <property type="entry name" value="WD_REPEATS_1"/>
    <property type="match status" value="3"/>
</dbReference>
<dbReference type="PROSITE" id="PS50082">
    <property type="entry name" value="WD_REPEATS_2"/>
    <property type="match status" value="6"/>
</dbReference>
<dbReference type="PROSITE" id="PS50294">
    <property type="entry name" value="WD_REPEATS_REGION"/>
    <property type="match status" value="6"/>
</dbReference>
<proteinExistence type="evidence at protein level"/>
<organism>
    <name type="scientific">Oryctolagus cuniculus</name>
    <name type="common">Rabbit</name>
    <dbReference type="NCBI Taxonomy" id="9986"/>
    <lineage>
        <taxon>Eukaryota</taxon>
        <taxon>Metazoa</taxon>
        <taxon>Chordata</taxon>
        <taxon>Craniata</taxon>
        <taxon>Vertebrata</taxon>
        <taxon>Euteleostomi</taxon>
        <taxon>Mammalia</taxon>
        <taxon>Eutheria</taxon>
        <taxon>Euarchontoglires</taxon>
        <taxon>Glires</taxon>
        <taxon>Lagomorpha</taxon>
        <taxon>Leporidae</taxon>
        <taxon>Oryctolagus</taxon>
    </lineage>
</organism>
<sequence>MTEQMTLRGTLKGHNGWVTQIATTPQFPDMILSASRDKTIIMWKLTRDETNYGIPQRALRGHSHFVSDVVISSDGQFALSGSWDGTLRLWDLTTGTTTRRFVGHTKDVLSVAFSSDNRQIVSGSRDKTIKLWNTLGVCKYTVQDESHSEWVSCVRFSPNSSNPIIVSCGWDKLVKVWNLANCKLKTNHIGHTGYLNTVTVSPDGSLCASGGKDGQAMLWDLNEGKHLYTLDGGDIINALCFSPNRYWLCAATGPSIKIWDLEGKIIVDELKQEVISTSSKAEPPQCTSLAWSADGQTLFAGYTDNLVRVWQVTIGTR</sequence>
<keyword id="KW-0002">3D-structure</keyword>
<keyword id="KW-0007">Acetylation</keyword>
<keyword id="KW-0053">Apoptosis</keyword>
<keyword id="KW-0090">Biological rhythms</keyword>
<keyword id="KW-0131">Cell cycle</keyword>
<keyword id="KW-1003">Cell membrane</keyword>
<keyword id="KW-0966">Cell projection</keyword>
<keyword id="KW-0963">Cytoplasm</keyword>
<keyword id="KW-0217">Developmental protein</keyword>
<keyword id="KW-0306">Gastrulation</keyword>
<keyword id="KW-0341">Growth regulation</keyword>
<keyword id="KW-0945">Host-virus interaction</keyword>
<keyword id="KW-0472">Membrane</keyword>
<keyword id="KW-0539">Nucleus</keyword>
<keyword id="KW-0597">Phosphoprotein</keyword>
<keyword id="KW-1185">Reference proteome</keyword>
<keyword id="KW-0677">Repeat</keyword>
<keyword id="KW-0687">Ribonucleoprotein</keyword>
<keyword id="KW-0689">Ribosomal protein</keyword>
<keyword id="KW-0810">Translation regulation</keyword>
<keyword id="KW-0853">WD repeat</keyword>
<gene>
    <name type="primary">RACK1</name>
</gene>
<reference key="1">
    <citation type="journal article" date="2011" name="Nature">
        <title>A high-resolution map of human evolutionary constraint using 29 mammals.</title>
        <authorList>
            <person name="Lindblad-Toh K."/>
            <person name="Garber M."/>
            <person name="Zuk O."/>
            <person name="Lin M.F."/>
            <person name="Parker B.J."/>
            <person name="Washietl S."/>
            <person name="Kheradpour P."/>
            <person name="Ernst J."/>
            <person name="Jordan G."/>
            <person name="Mauceli E."/>
            <person name="Ward L.D."/>
            <person name="Lowe C.B."/>
            <person name="Holloway A.K."/>
            <person name="Clamp M."/>
            <person name="Gnerre S."/>
            <person name="Alfoldi J."/>
            <person name="Beal K."/>
            <person name="Chang J."/>
            <person name="Clawson H."/>
            <person name="Cuff J."/>
            <person name="Di Palma F."/>
            <person name="Fitzgerald S."/>
            <person name="Flicek P."/>
            <person name="Guttman M."/>
            <person name="Hubisz M.J."/>
            <person name="Jaffe D.B."/>
            <person name="Jungreis I."/>
            <person name="Kent W.J."/>
            <person name="Kostka D."/>
            <person name="Lara M."/>
            <person name="Martins A.L."/>
            <person name="Massingham T."/>
            <person name="Moltke I."/>
            <person name="Raney B.J."/>
            <person name="Rasmussen M.D."/>
            <person name="Robinson J."/>
            <person name="Stark A."/>
            <person name="Vilella A.J."/>
            <person name="Wen J."/>
            <person name="Xie X."/>
            <person name="Zody M.C."/>
            <person name="Baldwin J."/>
            <person name="Bloom T."/>
            <person name="Chin C.W."/>
            <person name="Heiman D."/>
            <person name="Nicol R."/>
            <person name="Nusbaum C."/>
            <person name="Young S."/>
            <person name="Wilkinson J."/>
            <person name="Worley K.C."/>
            <person name="Kovar C.L."/>
            <person name="Muzny D.M."/>
            <person name="Gibbs R.A."/>
            <person name="Cree A."/>
            <person name="Dihn H.H."/>
            <person name="Fowler G."/>
            <person name="Jhangiani S."/>
            <person name="Joshi V."/>
            <person name="Lee S."/>
            <person name="Lewis L.R."/>
            <person name="Nazareth L.V."/>
            <person name="Okwuonu G."/>
            <person name="Santibanez J."/>
            <person name="Warren W.C."/>
            <person name="Mardis E.R."/>
            <person name="Weinstock G.M."/>
            <person name="Wilson R.K."/>
            <person name="Delehaunty K."/>
            <person name="Dooling D."/>
            <person name="Fronik C."/>
            <person name="Fulton L."/>
            <person name="Fulton B."/>
            <person name="Graves T."/>
            <person name="Minx P."/>
            <person name="Sodergren E."/>
            <person name="Birney E."/>
            <person name="Margulies E.H."/>
            <person name="Herrero J."/>
            <person name="Green E.D."/>
            <person name="Haussler D."/>
            <person name="Siepel A."/>
            <person name="Goldman N."/>
            <person name="Pollard K.S."/>
            <person name="Pedersen J.S."/>
            <person name="Lander E.S."/>
            <person name="Kellis M."/>
        </authorList>
    </citation>
    <scope>NUCLEOTIDE SEQUENCE [LARGE SCALE GENOMIC DNA]</scope>
    <source>
        <strain>Thorbecke</strain>
    </source>
</reference>
<reference evidence="25 26" key="2">
    <citation type="journal article" date="2013" name="Nature">
        <title>The initiation of mammalian protein synthesis and mRNA scanning mechanism.</title>
        <authorList>
            <person name="Lomakin I.B."/>
            <person name="Steitz T.A."/>
        </authorList>
    </citation>
    <scope>X-RAY CRYSTALLOGRAPHY (7.01 ANGSTROMS) OF 40S RIBOSOME</scope>
    <scope>FUNCTION</scope>
    <scope>SUBUNIT</scope>
    <scope>SUBCELLULAR LOCATION</scope>
</reference>
<reference evidence="23 24" key="3">
    <citation type="journal article" date="2015" name="Mol. Cell">
        <title>Cryo-EM of ribosomal 80S complexes with termination factors reveals the translocated cricket paralysis virus IRES.</title>
        <authorList>
            <person name="Muhs M."/>
            <person name="Hilal T."/>
            <person name="Mielke T."/>
            <person name="Skabkin M.A."/>
            <person name="Sanbonmatsu K.Y."/>
            <person name="Pestova T.V."/>
            <person name="Spahn C.M."/>
        </authorList>
    </citation>
    <scope>STRUCTURE BY ELECTRON MICROSCOPY (9.00 ANGSTROMS) OF RIBOSOME</scope>
    <scope>FUNCTION</scope>
    <scope>SUBUNIT</scope>
    <scope>SUBCELLULAR LOCATION</scope>
</reference>
<reference evidence="21 22" key="4">
    <citation type="journal article" date="2015" name="Nature">
        <title>Structural basis for stop codon recognition in eukaryotes.</title>
        <authorList>
            <person name="Brown A."/>
            <person name="Shao S."/>
            <person name="Murray J."/>
            <person name="Hegde R.S."/>
            <person name="Ramakrishnan V."/>
        </authorList>
    </citation>
    <scope>STRUCTURE BY ELECTRON MICROSCOPY (3.45 ANGSTROMS) OF 14-204 OF RIBOSOME</scope>
    <scope>SUBUNIT</scope>
    <scope>SUBCELLULAR LOCATION</scope>
</reference>
<reference evidence="27 28" key="5">
    <citation type="journal article" date="2016" name="Cell">
        <title>Decoding mammalian ribosome-mRNA states by translational GTPase complexes.</title>
        <authorList>
            <person name="Shao S."/>
            <person name="Murray J."/>
            <person name="Brown A."/>
            <person name="Taunton J."/>
            <person name="Ramakrishnan V."/>
            <person name="Hegde R.S."/>
        </authorList>
    </citation>
    <scope>STRUCTURE BY ELECTRON MICROSCOPY (3.31 ANGSTROMS) OF RIBOSOME</scope>
    <scope>FUNCTION</scope>
    <scope>SUBUNIT</scope>
    <scope>SUBCELLULAR LOCATION</scope>
</reference>
<reference evidence="31" key="6">
    <citation type="journal article" date="2018" name="Cell Rep.">
        <title>tRNA translocation by the eukaryotic 80S ribosome and the impact of GTP hydrolysis.</title>
        <authorList>
            <person name="Flis J."/>
            <person name="Holm M."/>
            <person name="Rundlet E.J."/>
            <person name="Loerke J."/>
            <person name="Hilal T."/>
            <person name="Dabrowski M."/>
            <person name="Burger J."/>
            <person name="Mielke T."/>
            <person name="Blanchard S.C."/>
            <person name="Spahn C.M.T."/>
            <person name="Budkevich T.V."/>
        </authorList>
    </citation>
    <scope>STRUCTURE BY ELECTRON MICROSCOPY (3.60 ANGSTROMS) OF RIBOSOME</scope>
    <scope>FUNCTION</scope>
    <scope>SUBCELLULAR LOCATION</scope>
    <scope>SUBUNIT</scope>
</reference>
<reference evidence="29 30" key="7">
    <citation type="journal article" date="2018" name="Elife">
        <title>Dual tRNA mimicry in the Cricket paralysis virus IRES uncovers an unexpected similarity with the Hepatitis C Virus IRES.</title>
        <authorList>
            <person name="Pisareva V.P."/>
            <person name="Pisarev A.V."/>
            <person name="Fernandez I.S."/>
        </authorList>
    </citation>
    <scope>STRUCTURE BY ELECTRON MICROSCOPY (3.20 ANGSTROMS) OF RIBOSOME</scope>
    <scope>SUBCELLULAR LOCATION</scope>
    <scope>SUBUNIT</scope>
</reference>
<reference evidence="34 35" key="8">
    <citation type="journal article" date="2018" name="Elife">
        <title>Structures of translationally inactive mammalian ribosomes.</title>
        <authorList>
            <person name="Brown A."/>
            <person name="Baird M.R."/>
            <person name="Yip M.C."/>
            <person name="Murray J."/>
            <person name="Shao S."/>
        </authorList>
    </citation>
    <scope>STRUCTURE BY ELECTRON MICROSCOPY (3.30 ANGSTROMS) OF RIBOSOME</scope>
    <scope>SUBCELLULAR LOCATION</scope>
    <scope>SUBUNIT</scope>
</reference>
<reference evidence="32 33" key="9">
    <citation type="journal article" date="2018" name="Mol. Cell">
        <title>ZNF598 is a quality control sensor of collided ribosomes.</title>
        <authorList>
            <person name="Juszkiewicz S."/>
            <person name="Chandrasekaran V."/>
            <person name="Lin Z."/>
            <person name="Kraatz S."/>
            <person name="Ramakrishnan V."/>
            <person name="Hegde R.S."/>
        </authorList>
    </citation>
    <scope>STRUCTURE BY ELECTRON MICROSCOPY (3.80 ANGSTROMS) OF RIBOSOME</scope>
    <scope>SUBCELLULAR LOCATION</scope>
    <scope>SUBUNIT</scope>
</reference>
<reference evidence="38 39" key="10">
    <citation type="journal article" date="2019" name="Elife">
        <title>Structural and mutational analysis of the ribosome-arresting human XBP1u.</title>
        <authorList>
            <person name="Shanmuganathan V."/>
            <person name="Schiller N."/>
            <person name="Magoulopoulou A."/>
            <person name="Cheng J."/>
            <person name="Braunger K."/>
            <person name="Cymer F."/>
            <person name="Berninghausen O."/>
            <person name="Beatrix B."/>
            <person name="Kohno K."/>
            <person name="von Heijne G."/>
            <person name="Beckmann R."/>
        </authorList>
    </citation>
    <scope>STRUCTURE BY ELECTRON MICROSCOPY (3.00 ANGSTROMS) OF RIBOSOME</scope>
    <scope>SUBCELLULAR LOCATION</scope>
    <scope>SUBUNIT</scope>
</reference>
<reference evidence="36 37" key="11">
    <citation type="journal article" date="2019" name="EMBO J.">
        <title>The Israeli acute paralysis virus IRES captures host ribosomes by mimicking a ribosomal state with hybrid tRNAs.</title>
        <authorList>
            <person name="Acosta-Reyes F."/>
            <person name="Neupane R."/>
            <person name="Frank J."/>
            <person name="Fernandez I.S."/>
        </authorList>
    </citation>
    <scope>STRUCTURE BY ELECTRON MICROSCOPY (3.10 ANGSTROMS) OF RIBOSOME</scope>
    <scope>SUBCELLULAR LOCATION</scope>
    <scope>SUBUNIT</scope>
</reference>
<reference evidence="40" key="12">
    <citation type="journal article" date="2019" name="Nat. Struct. Mol. Biol.">
        <title>Mechanism of ribosome stalling during translation of a poly(A) tail.</title>
        <authorList>
            <person name="Chandrasekaran V."/>
            <person name="Juszkiewicz S."/>
            <person name="Choi J."/>
            <person name="Puglisi J.D."/>
            <person name="Brown A."/>
            <person name="Shao S."/>
            <person name="Ramakrishnan V."/>
            <person name="Hegde R.S."/>
        </authorList>
    </citation>
    <scope>STRUCTURE BY ELECTRON MICROSCOPY (2.80 ANGSTROMS) OF RIBOSOME</scope>
    <scope>SUBCELLULAR LOCATION</scope>
    <scope>SUBUNIT</scope>
</reference>
<reference evidence="43 44" key="13">
    <citation type="journal article" date="2020" name="Cell Rep.">
        <title>The Halastavi arva virus intergenic region IRES promotes translation by the simplest possible initiation mechanism.</title>
        <authorList>
            <person name="Abaeva I.S."/>
            <person name="Vicens Q."/>
            <person name="Bochler A."/>
            <person name="Soufari H."/>
            <person name="Simonetti A."/>
            <person name="Pestova T.V."/>
            <person name="Hashem Y."/>
            <person name="Hellen C.U.T."/>
        </authorList>
    </citation>
    <scope>STRUCTURE BY ELECTRON MICROSCOPY (3.49 ANGSTROMS) OF RIBOSOME</scope>
    <scope>SUBCELLULAR LOCATION</scope>
    <scope>SUBUNIT</scope>
</reference>
<reference evidence="41 42" key="14">
    <citation type="journal article" date="2020" name="Elife">
        <title>A complex IRES at the 5'-UTR of a viral mRNA assembles a functional 48S complex via an uAUG intermediate.</title>
        <authorList>
            <person name="Neupane R."/>
            <person name="Pisareva V.P."/>
            <person name="Rodriguez C.F."/>
            <person name="Pisarev A.V."/>
            <person name="Fernandez I.S."/>
        </authorList>
    </citation>
    <scope>STRUCTURE BY ELECTRON MICROSCOPY (3.00 ANGSTROMS) OF RIBOSOME</scope>
    <scope>SUBUNIT</scope>
    <scope>SUBCELLULAR LOCATION</scope>
</reference>
<reference evidence="46 47 48 49" key="15">
    <citation type="journal article" date="2022" name="EMBO J.">
        <title>Molecular architecture of 40S translation initiation complexes on the hepatitis C virus IRES.</title>
        <authorList>
            <person name="Brown Z.P."/>
            <person name="Abaeva I.S."/>
            <person name="De S."/>
            <person name="Hellen C.U.T."/>
            <person name="Pestova T.V."/>
            <person name="Frank J."/>
        </authorList>
    </citation>
    <scope>STRUCTURE BY ELECTRON MICROSCOPY (3.50 ANGSTROMS) OF RIBOSOME</scope>
    <scope>SUBCELLULAR LOCATION</scope>
    <scope>SUBUNIT</scope>
</reference>
<reference evidence="50 51" key="16">
    <citation type="journal article" date="2022" name="Mol. Cell">
        <title>Direct epitranscriptomic regulation of mammalian translation initiation through N4-acetylcytidine.</title>
        <authorList>
            <person name="Arango D."/>
            <person name="Sturgill D."/>
            <person name="Yang R."/>
            <person name="Kanai T."/>
            <person name="Bauer P."/>
            <person name="Roy J."/>
            <person name="Wang Z."/>
            <person name="Hosogane M."/>
            <person name="Schiffers S."/>
            <person name="Oberdoerffer S."/>
        </authorList>
    </citation>
    <scope>STRUCTURE BY ELECTRON MICROSCOPY (2.80 ANGSTROMS) OF 2-117 OF RIBOSOME</scope>
    <scope>SUBCELLULAR LOCATION</scope>
    <scope>SUBUNIT</scope>
</reference>
<reference evidence="45" key="17">
    <citation type="journal article" date="2023" name="Nature">
        <title>A molecular network of conserved factors keeps ribosomes dormant in the egg.</title>
        <authorList>
            <person name="Leesch F."/>
            <person name="Lorenzo-Orts L."/>
            <person name="Pribitzer C."/>
            <person name="Grishkovskaya I."/>
            <person name="Roehsner J."/>
            <person name="Chugunova A."/>
            <person name="Matzinger M."/>
            <person name="Roitinger E."/>
            <person name="Belacic K."/>
            <person name="Kandolf S."/>
            <person name="Lin T.Y."/>
            <person name="Mechtler K."/>
            <person name="Meinhart A."/>
            <person name="Haselbach D."/>
            <person name="Pauli A."/>
        </authorList>
    </citation>
    <scope>STRUCTURE BY ELECTRON MICROSCOPY (2.30 ANGSTROMS) OF RIBOSOME</scope>
    <scope>SUBCELLULAR LOCATION</scope>
    <scope>SUBUNIT</scope>
</reference>
<name>RACK1_RABIT</name>
<comment type="function">
    <text evidence="1 2 4 5 7 11">Scaffolding protein involved in the recruitment, assembly and/or regulation of a variety of signaling molecules (By similarity). Interacts with a wide variety of proteins and plays a role in many cellular processes (By similarity). Component of the 40S ribosomal subunit involved in translational repression (PubMed:23873042, PubMed:25601755, PubMed:27863242, PubMed:30517857). Involved in the initiation of the ribosome quality control (RQC), a pathway that takes place when a ribosome has stalled during translation, by promoting ubiquitination of a subset of 40S ribosomal subunits (By similarity). Binds to and stabilizes activated protein kinase C (PKC), increasing PKC-mediated phosphorylation (By similarity). May recruit activated PKC to the ribosome, leading to phosphorylation of EIF6 (By similarity). Inhibits the activity of SRC kinases including SRC, LCK and YES1 (By similarity). Inhibits cell growth by prolonging the G0/G1 phase of the cell cycle (By similarity). Enhances phosphorylation of BMAL1 by PRKCA and inhibits transcriptional activity of the BMAL1-CLOCK heterodimer (By similarity). Facilitates ligand-independent nuclear translocation of AR following PKC activation, represses AR transactivation activity and is required for phosphorylation of AR by SRC (By similarity). Modulates IGF1R-dependent integrin signaling and promotes cell spreading and contact with the extracellular matrix (By similarity). Involved in PKC-dependent translocation of ADAM12 to the cell membrane (By similarity). Promotes the ubiquitination and proteasome-mediated degradation of proteins such as CLEC1B and HIF1A (By similarity). Required for VANGL2 membrane localization, inhibits Wnt signaling, and regulates cellular polarization and oriented cell division during gastrulation (By similarity). Required for PTK2/FAK1 phosphorylation and dephosphorylation (By similarity). Regulates internalization of the muscarinic receptor CHRM2 (By similarity). Promotes apoptosis by increasing oligomerization of BAX and disrupting the interaction of BAX with the anti-apoptotic factor BCL2L (By similarity). Inhibits TRPM6 channel activity (By similarity). Regulates cell surface expression of some GPCRs such as TBXA2R (By similarity). Plays a role in regulation of FLT1-mediated cell migration (By similarity). Involved in the transport of ABCB4 from the Golgi to the apical bile canalicular membrane (By similarity). Promotes migration of breast carcinoma cells by binding to and activating RHOA (By similarity). Acts as an adapter for the dephosphorylation and inactivation of AKT1 by promoting recruitment of PP2A phosphatase to AKT1 (By similarity).</text>
</comment>
<comment type="subunit">
    <text evidence="1 2 4 5 6 7 8 9 10 11 12 13 14 15 16 17 18 19">Monomer; also forms homod (By similarity)imers and homooligomers (By similarity). Interacts with CPNE3 (By similarity). May interact with ABCB4 (By similarity). Component of the small (40S) ribosomal subunit (By similarity). Interacts with the 80S ribosome (PubMed:23873042, PubMed:25601755, PubMed:26245381, PubMed:27863242, PubMed:29856316, PubMed:30293783, PubMed:30355441, PubMed:30517857, PubMed:31246176, PubMed:31609474, PubMed:31768042, PubMed:32286223, PubMed:33296660, PubMed:35679869, PubMed:35822879, PubMed:36653451). Binds NHERF1 (By similarity). Forms a ternary complex with TRIM63 and PRKCE (By similarity). Interacts with HABP4, KRT1 and OTUB1 (By similarity). Interacts with SRC (via SH2 domain); the interaction is enhanced by tyrosine phosphorylation of RACK1 (By similarity). Recruited in a circadian manner into a nuclear complex which also includes BMAL1 and PRKCA (By similarity). Interacts with AR (By similarity). Interacts with IGF1R but not with INSR (By similarity). Interacts with ADAM12 (By similarity). Interacts with CLEC1B (via N-terminal region) and with HIF1A; the interaction promotes their degradation (By similarity). Interacts with RHOA; this enhances RHOA activation and promotes cell migration (By similarity)3 Interacts with CHRM2; the interaction regulates CHRM2 internalization (By similarity). Interacts with TRPM6 (via kinase domain) (By similarity). Interacts with PTK2/FAK1; required for PTK2/FAK1 phosphorylation and dephosphorylation (By similarity). Interacts with FLT1 (By similarity). Interacts with TBXA2R isoform 2 (By similarity). Interacts with HRAS (By similarity). Interacts with LARP4B (By similarity). Interacts with LARP4 (By similarity). Interacts with PKD2L1 (By similarity). Interacts with isoform 2 of SLC4A7 (By similarity). Interacts with SLC9A5; this interaction regulates SLC9A5 cell-surface targeting and SLC9A5 activity (By similarity). Interacts with SLC9A6; this interaction regulates the distribution of SLC9A6 between endosomes and the plasma membrane (By similarity).</text>
</comment>
<comment type="subcellular location">
    <subcellularLocation>
        <location evidence="1">Cell membrane</location>
        <topology evidence="1">Peripheral membrane protein</topology>
    </subcellularLocation>
    <subcellularLocation>
        <location evidence="4 5 6 7 8 9 10 11 12 13 14 15 16 17 18 19">Cytoplasm</location>
    </subcellularLocation>
    <subcellularLocation>
        <location evidence="1">Cytoplasm</location>
        <location evidence="1">Perinuclear region</location>
    </subcellularLocation>
    <subcellularLocation>
        <location evidence="1">Nucleus</location>
    </subcellularLocation>
    <subcellularLocation>
        <location evidence="2">Perikaryon</location>
    </subcellularLocation>
    <subcellularLocation>
        <location evidence="2">Cell projection</location>
        <location evidence="2">Dendrite</location>
    </subcellularLocation>
    <subcellularLocation>
        <location evidence="1">Cell projection</location>
        <location evidence="1">Phagocytic cup</location>
    </subcellularLocation>
    <text evidence="1 2">Recruited to the plasma membrane through interaction with KRT1 which binds to membrane-bound ITGB1. Also associated with the membrane in oncogene-transformed cells. PKC activation induces translocation from the perinuclear region to the cell periphery (By similarity). In the brain, detected mainly in cell bodies and dendrites with little expression in axonal fibers or nuclei (By similarity). Localized to phagocytic cups following infection by Y.pestis (By similarity).</text>
</comment>
<comment type="domain">
    <text evidence="1">The 7 WD repeats mediate protein-protein interactions with binding partners.</text>
</comment>
<comment type="PTM">
    <text evidence="1">Phosphorylated on Tyr-228 and/or Tyr-246 by SRC. This is required for binding to SRC.</text>
</comment>
<comment type="similarity">
    <text evidence="20">Belongs to the WD repeat G protein beta family. Ribosomal protein RACK1 subfamily.</text>
</comment>
<evidence type="ECO:0000250" key="1">
    <source>
        <dbReference type="UniProtKB" id="P63244"/>
    </source>
</evidence>
<evidence type="ECO:0000250" key="2">
    <source>
        <dbReference type="UniProtKB" id="P68040"/>
    </source>
</evidence>
<evidence type="ECO:0000255" key="3">
    <source>
        <dbReference type="PROSITE-ProRule" id="PRU00221"/>
    </source>
</evidence>
<evidence type="ECO:0000269" key="4">
    <source>
    </source>
</evidence>
<evidence type="ECO:0000269" key="5">
    <source>
    </source>
</evidence>
<evidence type="ECO:0000269" key="6">
    <source>
    </source>
</evidence>
<evidence type="ECO:0000269" key="7">
    <source>
    </source>
</evidence>
<evidence type="ECO:0000269" key="8">
    <source>
    </source>
</evidence>
<evidence type="ECO:0000269" key="9">
    <source>
    </source>
</evidence>
<evidence type="ECO:0000269" key="10">
    <source>
    </source>
</evidence>
<evidence type="ECO:0000269" key="11">
    <source>
    </source>
</evidence>
<evidence type="ECO:0000269" key="12">
    <source>
    </source>
</evidence>
<evidence type="ECO:0000269" key="13">
    <source>
    </source>
</evidence>
<evidence type="ECO:0000269" key="14">
    <source>
    </source>
</evidence>
<evidence type="ECO:0000269" key="15">
    <source>
    </source>
</evidence>
<evidence type="ECO:0000269" key="16">
    <source>
    </source>
</evidence>
<evidence type="ECO:0000269" key="17">
    <source>
    </source>
</evidence>
<evidence type="ECO:0000269" key="18">
    <source>
    </source>
</evidence>
<evidence type="ECO:0000269" key="19">
    <source>
    </source>
</evidence>
<evidence type="ECO:0000305" key="20"/>
<evidence type="ECO:0007744" key="21">
    <source>
        <dbReference type="PDB" id="3JAG"/>
    </source>
</evidence>
<evidence type="ECO:0007744" key="22">
    <source>
        <dbReference type="PDB" id="3JAH"/>
    </source>
</evidence>
<evidence type="ECO:0007744" key="23">
    <source>
        <dbReference type="PDB" id="4D5L"/>
    </source>
</evidence>
<evidence type="ECO:0007744" key="24">
    <source>
        <dbReference type="PDB" id="4D61"/>
    </source>
</evidence>
<evidence type="ECO:0007744" key="25">
    <source>
        <dbReference type="PDB" id="4KZX"/>
    </source>
</evidence>
<evidence type="ECO:0007744" key="26">
    <source>
        <dbReference type="PDB" id="4KZY"/>
    </source>
</evidence>
<evidence type="ECO:0007744" key="27">
    <source>
        <dbReference type="PDB" id="5LZS"/>
    </source>
</evidence>
<evidence type="ECO:0007744" key="28">
    <source>
        <dbReference type="PDB" id="5LZT"/>
    </source>
</evidence>
<evidence type="ECO:0007744" key="29">
    <source>
        <dbReference type="PDB" id="6D90"/>
    </source>
</evidence>
<evidence type="ECO:0007744" key="30">
    <source>
        <dbReference type="PDB" id="6D9J"/>
    </source>
</evidence>
<evidence type="ECO:0007744" key="31">
    <source>
        <dbReference type="PDB" id="6GZ3"/>
    </source>
</evidence>
<evidence type="ECO:0007744" key="32">
    <source>
        <dbReference type="PDB" id="6HCF"/>
    </source>
</evidence>
<evidence type="ECO:0007744" key="33">
    <source>
        <dbReference type="PDB" id="6HCJ"/>
    </source>
</evidence>
<evidence type="ECO:0007744" key="34">
    <source>
        <dbReference type="PDB" id="6MTB"/>
    </source>
</evidence>
<evidence type="ECO:0007744" key="35">
    <source>
        <dbReference type="PDB" id="6MTC"/>
    </source>
</evidence>
<evidence type="ECO:0007744" key="36">
    <source>
        <dbReference type="PDB" id="6P4G"/>
    </source>
</evidence>
<evidence type="ECO:0007744" key="37">
    <source>
        <dbReference type="PDB" id="6P4H"/>
    </source>
</evidence>
<evidence type="ECO:0007744" key="38">
    <source>
        <dbReference type="PDB" id="6R5Q"/>
    </source>
</evidence>
<evidence type="ECO:0007744" key="39">
    <source>
        <dbReference type="PDB" id="6R6G"/>
    </source>
</evidence>
<evidence type="ECO:0007744" key="40">
    <source>
        <dbReference type="PDB" id="6SGC"/>
    </source>
</evidence>
<evidence type="ECO:0007744" key="41">
    <source>
        <dbReference type="PDB" id="6W2S"/>
    </source>
</evidence>
<evidence type="ECO:0007744" key="42">
    <source>
        <dbReference type="PDB" id="6W2T"/>
    </source>
</evidence>
<evidence type="ECO:0007744" key="43">
    <source>
        <dbReference type="PDB" id="6ZVK"/>
    </source>
</evidence>
<evidence type="ECO:0007744" key="44">
    <source>
        <dbReference type="PDB" id="7A01"/>
    </source>
</evidence>
<evidence type="ECO:0007744" key="45">
    <source>
        <dbReference type="PDB" id="7OYD"/>
    </source>
</evidence>
<evidence type="ECO:0007744" key="46">
    <source>
        <dbReference type="PDB" id="7SYI"/>
    </source>
</evidence>
<evidence type="ECO:0007744" key="47">
    <source>
        <dbReference type="PDB" id="7SYJ"/>
    </source>
</evidence>
<evidence type="ECO:0007744" key="48">
    <source>
        <dbReference type="PDB" id="7SYO"/>
    </source>
</evidence>
<evidence type="ECO:0007744" key="49">
    <source>
        <dbReference type="PDB" id="7SYP"/>
    </source>
</evidence>
<evidence type="ECO:0007744" key="50">
    <source>
        <dbReference type="PDB" id="7UCJ"/>
    </source>
</evidence>
<evidence type="ECO:0007744" key="51">
    <source>
        <dbReference type="PDB" id="7UCK"/>
    </source>
</evidence>
<evidence type="ECO:0007829" key="52">
    <source>
        <dbReference type="PDB" id="6YAL"/>
    </source>
</evidence>
<evidence type="ECO:0007829" key="53">
    <source>
        <dbReference type="PDB" id="7JQB"/>
    </source>
</evidence>
<evidence type="ECO:0007829" key="54">
    <source>
        <dbReference type="PDB" id="7JQC"/>
    </source>
</evidence>
<evidence type="ECO:0007829" key="55">
    <source>
        <dbReference type="PDB" id="8P03"/>
    </source>
</evidence>
<protein>
    <recommendedName>
        <fullName evidence="20">Small ribosomal subunit protein RACK1</fullName>
    </recommendedName>
    <alternativeName>
        <fullName>Receptor of activated protein C kinase 1</fullName>
    </alternativeName>
</protein>
<accession>G1SJB4</accession>
<feature type="chain" id="PRO_0000460072" description="Small ribosomal subunit protein RACK1">
    <location>
        <begin position="1"/>
        <end position="317"/>
    </location>
</feature>
<feature type="repeat" description="WD 1" evidence="3">
    <location>
        <begin position="13"/>
        <end position="44"/>
    </location>
</feature>
<feature type="repeat" description="WD 2" evidence="3">
    <location>
        <begin position="61"/>
        <end position="91"/>
    </location>
</feature>
<feature type="repeat" description="WD 3" evidence="3">
    <location>
        <begin position="103"/>
        <end position="133"/>
    </location>
</feature>
<feature type="repeat" description="WD 4" evidence="3">
    <location>
        <begin position="146"/>
        <end position="178"/>
    </location>
</feature>
<feature type="repeat" description="WD 5" evidence="3">
    <location>
        <begin position="190"/>
        <end position="220"/>
    </location>
</feature>
<feature type="repeat" description="WD 6" evidence="3">
    <location>
        <begin position="231"/>
        <end position="260"/>
    </location>
</feature>
<feature type="repeat" description="WD 7" evidence="3">
    <location>
        <begin position="281"/>
        <end position="311"/>
    </location>
</feature>
<feature type="modified residue" description="N-acetylmethionine" evidence="1">
    <location>
        <position position="1"/>
    </location>
</feature>
<feature type="modified residue" description="Phosphothreonine" evidence="1">
    <location>
        <position position="6"/>
    </location>
</feature>
<feature type="modified residue" description="Phosphothreonine" evidence="1">
    <location>
        <position position="10"/>
    </location>
</feature>
<feature type="modified residue" description="Phosphotyrosine" evidence="1">
    <location>
        <position position="52"/>
    </location>
</feature>
<feature type="modified residue" description="Phosphothreonine" evidence="1">
    <location>
        <position position="96"/>
    </location>
</feature>
<feature type="modified residue" description="N6-acetyllysine" evidence="1">
    <location>
        <position position="130"/>
    </location>
</feature>
<feature type="modified residue" description="N6-acetyllysine" evidence="2">
    <location>
        <position position="183"/>
    </location>
</feature>
<feature type="modified residue" description="Phosphotyrosine" evidence="1">
    <location>
        <position position="228"/>
    </location>
</feature>
<feature type="modified residue" description="Phosphoserine" evidence="1">
    <location>
        <position position="276"/>
    </location>
</feature>
<feature type="modified residue" description="Phosphothreonine" evidence="1">
    <location>
        <position position="277"/>
    </location>
</feature>
<feature type="modified residue" description="Phosphoserine" evidence="1">
    <location>
        <position position="278"/>
    </location>
</feature>
<feature type="modified residue" description="Phosphoserine" evidence="1">
    <location>
        <position position="279"/>
    </location>
</feature>
<feature type="modified residue" description="Phosphothreonine" evidence="2">
    <location>
        <position position="316"/>
    </location>
</feature>
<feature type="strand" evidence="52">
    <location>
        <begin position="4"/>
        <end position="12"/>
    </location>
</feature>
<feature type="strand" evidence="53">
    <location>
        <begin position="18"/>
        <end position="22"/>
    </location>
</feature>
<feature type="strand" evidence="53">
    <location>
        <begin position="32"/>
        <end position="38"/>
    </location>
</feature>
<feature type="strand" evidence="53">
    <location>
        <begin position="40"/>
        <end position="45"/>
    </location>
</feature>
<feature type="strand" evidence="53">
    <location>
        <begin position="52"/>
        <end position="59"/>
    </location>
</feature>
<feature type="strand" evidence="52">
    <location>
        <begin position="66"/>
        <end position="71"/>
    </location>
</feature>
<feature type="strand" evidence="55">
    <location>
        <begin position="73"/>
        <end position="76"/>
    </location>
</feature>
<feature type="strand" evidence="53">
    <location>
        <begin position="78"/>
        <end position="82"/>
    </location>
</feature>
<feature type="strand" evidence="53">
    <location>
        <begin position="87"/>
        <end position="91"/>
    </location>
</feature>
<feature type="turn" evidence="53">
    <location>
        <begin position="92"/>
        <end position="95"/>
    </location>
</feature>
<feature type="strand" evidence="53">
    <location>
        <begin position="96"/>
        <end position="98"/>
    </location>
</feature>
<feature type="strand" evidence="54">
    <location>
        <begin position="99"/>
        <end position="101"/>
    </location>
</feature>
<feature type="strand" evidence="53">
    <location>
        <begin position="110"/>
        <end position="112"/>
    </location>
</feature>
<feature type="strand" evidence="53">
    <location>
        <begin position="115"/>
        <end position="117"/>
    </location>
</feature>
<feature type="strand" evidence="53">
    <location>
        <begin position="121"/>
        <end position="123"/>
    </location>
</feature>
<feature type="strand" evidence="53">
    <location>
        <begin position="125"/>
        <end position="127"/>
    </location>
</feature>
<feature type="strand" evidence="52">
    <location>
        <begin position="129"/>
        <end position="132"/>
    </location>
</feature>
<feature type="strand" evidence="53">
    <location>
        <begin position="134"/>
        <end position="136"/>
    </location>
</feature>
<feature type="strand" evidence="52">
    <location>
        <begin position="139"/>
        <end position="142"/>
    </location>
</feature>
<feature type="strand" evidence="53">
    <location>
        <begin position="143"/>
        <end position="146"/>
    </location>
</feature>
<feature type="strand" evidence="52">
    <location>
        <begin position="151"/>
        <end position="156"/>
    </location>
</feature>
<feature type="strand" evidence="55">
    <location>
        <begin position="160"/>
        <end position="162"/>
    </location>
</feature>
<feature type="strand" evidence="53">
    <location>
        <begin position="164"/>
        <end position="167"/>
    </location>
</feature>
<feature type="turn" evidence="54">
    <location>
        <begin position="170"/>
        <end position="172"/>
    </location>
</feature>
<feature type="strand" evidence="53">
    <location>
        <begin position="174"/>
        <end position="181"/>
    </location>
</feature>
<feature type="strand" evidence="53">
    <location>
        <begin position="186"/>
        <end position="189"/>
    </location>
</feature>
<feature type="strand" evidence="53">
    <location>
        <begin position="195"/>
        <end position="200"/>
    </location>
</feature>
<feature type="strand" evidence="53">
    <location>
        <begin position="204"/>
        <end position="213"/>
    </location>
</feature>
<feature type="strand" evidence="53">
    <location>
        <begin position="217"/>
        <end position="225"/>
    </location>
</feature>
<feature type="strand" evidence="52">
    <location>
        <begin position="226"/>
        <end position="231"/>
    </location>
</feature>
<feature type="strand" evidence="53">
    <location>
        <begin position="236"/>
        <end position="241"/>
    </location>
</feature>
<feature type="strand" evidence="53">
    <location>
        <begin position="243"/>
        <end position="252"/>
    </location>
</feature>
<feature type="strand" evidence="53">
    <location>
        <begin position="255"/>
        <end position="264"/>
    </location>
</feature>
<feature type="strand" evidence="53">
    <location>
        <begin position="266"/>
        <end position="270"/>
    </location>
</feature>
<feature type="strand" evidence="55">
    <location>
        <begin position="279"/>
        <end position="281"/>
    </location>
</feature>
<feature type="strand" evidence="53">
    <location>
        <begin position="287"/>
        <end position="290"/>
    </location>
</feature>
<feature type="strand" evidence="53">
    <location>
        <begin position="293"/>
        <end position="295"/>
    </location>
</feature>
<feature type="strand" evidence="53">
    <location>
        <begin position="297"/>
        <end position="301"/>
    </location>
</feature>
<feature type="strand" evidence="53">
    <location>
        <begin position="303"/>
        <end position="305"/>
    </location>
</feature>
<feature type="strand" evidence="53">
    <location>
        <begin position="307"/>
        <end position="312"/>
    </location>
</feature>